<name>PUR4_PSEPF</name>
<organism>
    <name type="scientific">Pseudomonas fluorescens (strain Pf0-1)</name>
    <dbReference type="NCBI Taxonomy" id="205922"/>
    <lineage>
        <taxon>Bacteria</taxon>
        <taxon>Pseudomonadati</taxon>
        <taxon>Pseudomonadota</taxon>
        <taxon>Gammaproteobacteria</taxon>
        <taxon>Pseudomonadales</taxon>
        <taxon>Pseudomonadaceae</taxon>
        <taxon>Pseudomonas</taxon>
    </lineage>
</organism>
<sequence>MLILRGAPALSAFRHSKLLEQLSQKVPAVSGLYAEFAHFAEVTGVLTGDEQQVLARLLKYGPSVPVQEPTGRLFLVLPRFGTISPWSSKASDIARNCGLSKIQRLERGIAFYVAGQFSETEAQQIADVLHDRMTQIVLANLEQAAGLFSHAEPKPLTAIDILGGGRAALEKANVELGLALAEDEIDYLVNAFNGLKRNPHDIELMMFAQANSEHCRHKIFNASWDIDGESQEKSLFGMIKNTYQMHSEGVLSAYKDNASVIVGNVAGRFFPDPETRQYGAVQEPVHILMKVETHNHPTAIAPFPGASTGSGGEIRDEGATGRGAKPKAGLTGFTVSNLQIPGFEQPWEVPYGKPERIVNALDIMIEGPLGGAAFNNEFGRPALTGYFRTFEQSITTPHGDEVRGYHKPIMLAGGMGNIREEHVKKGEIVVGSKLVVLGGPAMLIGLGGGAASSMATGTSSADLDFASVQRENPEMERRCQEVIDRCWQLGDKNPISFIHDVGAGGLSNAFPELVNDGDRGGRFELRNIPNDEPGMAPHEIWSNESQERYVLAVGPADFERFKAICERERCPFAVVGEATAEPQLTVTDSHFGNNPVDMPLEVLLGKAPRMHRSVVREAELGDDFDPSNLDIGESIERVLHHPAVASKSFLITIGDRTITGLVARDQMVGPWQVPVADVAVTATSFDVYTGEAMAMGERTPLALLDAPASGRMAIGETITNIAASRINKLSDIKLSANWMSAAGHPGEDARLYDTVKAVGMELCPELGITIPVGKDSMSMATRWNDNGEDKTVTSPMSLIVTGFAPVADIRQTLTPELRMDKGTTDLILIDLGRGQNRMGASILAQVHGKLGKQAPDVDDAEDLKAFFAVIQGLNADGHLLAYHDRSDGGLLTSVMEMAFAGHCGLSLNLDSVAESSAEIAAILFNEELGAVIQVRQDATPDILAQFSAAGLGDCVSVIGQPINNGQINITFNGDTVFEGQRRLLQRQWAETSYQIQRLRDNADCAEQEFDALLEEDNPGLSVKLSYDVNQDIAAPYIKKGIRPQVAVLREQGVNGQVEMAAAFDRAGFNAIDVHMSDILAGRVDLNEFKGLVACGGFSYGDVLGAGEGWAKSALFNSRARDAFQGFFERNDSFTLGVCNGCQMMSNLHELIPGSEFWPHFVRNRSEQFEARVAMVQVQESNSIFLQGMAGSRMPIAIAHGEGHAEFESEEALLEADLSGCVAMRFVDNHGKVTEAYPANPNGSPRGITGLTSRDGRVTIMMPHPERVFRAVQNSWRSEDWNEDAPWMRMFRNARVWVN</sequence>
<accession>Q3KHL4</accession>
<reference key="1">
    <citation type="journal article" date="2009" name="Genome Biol.">
        <title>Genomic and genetic analyses of diversity and plant interactions of Pseudomonas fluorescens.</title>
        <authorList>
            <person name="Silby M.W."/>
            <person name="Cerdeno-Tarraga A.M."/>
            <person name="Vernikos G.S."/>
            <person name="Giddens S.R."/>
            <person name="Jackson R.W."/>
            <person name="Preston G.M."/>
            <person name="Zhang X.-X."/>
            <person name="Moon C.D."/>
            <person name="Gehrig S.M."/>
            <person name="Godfrey S.A.C."/>
            <person name="Knight C.G."/>
            <person name="Malone J.G."/>
            <person name="Robinson Z."/>
            <person name="Spiers A.J."/>
            <person name="Harris S."/>
            <person name="Challis G.L."/>
            <person name="Yaxley A.M."/>
            <person name="Harris D."/>
            <person name="Seeger K."/>
            <person name="Murphy L."/>
            <person name="Rutter S."/>
            <person name="Squares R."/>
            <person name="Quail M.A."/>
            <person name="Saunders E."/>
            <person name="Mavromatis K."/>
            <person name="Brettin T.S."/>
            <person name="Bentley S.D."/>
            <person name="Hothersall J."/>
            <person name="Stephens E."/>
            <person name="Thomas C.M."/>
            <person name="Parkhill J."/>
            <person name="Levy S.B."/>
            <person name="Rainey P.B."/>
            <person name="Thomson N.R."/>
        </authorList>
    </citation>
    <scope>NUCLEOTIDE SEQUENCE [LARGE SCALE GENOMIC DNA]</scope>
    <source>
        <strain>Pf0-1</strain>
    </source>
</reference>
<feature type="chain" id="PRO_0000264588" description="Phosphoribosylformylglycinamidine synthase">
    <location>
        <begin position="1"/>
        <end position="1298"/>
    </location>
</feature>
<feature type="domain" description="Glutamine amidotransferase type-1" evidence="1">
    <location>
        <begin position="1045"/>
        <end position="1298"/>
    </location>
</feature>
<feature type="region of interest" description="Disordered" evidence="2">
    <location>
        <begin position="301"/>
        <end position="328"/>
    </location>
</feature>
<feature type="active site" description="Nucleophile" evidence="1">
    <location>
        <position position="1138"/>
    </location>
</feature>
<feature type="active site" evidence="1">
    <location>
        <position position="1263"/>
    </location>
</feature>
<feature type="active site" evidence="1">
    <location>
        <position position="1265"/>
    </location>
</feature>
<feature type="binding site" evidence="1">
    <location>
        <begin position="305"/>
        <end position="316"/>
    </location>
    <ligand>
        <name>ATP</name>
        <dbReference type="ChEBI" id="CHEBI:30616"/>
    </ligand>
</feature>
<feature type="binding site" evidence="1">
    <location>
        <begin position="384"/>
        <end position="386"/>
    </location>
    <ligand>
        <name>ATP</name>
        <dbReference type="ChEBI" id="CHEBI:30616"/>
    </ligand>
</feature>
<feature type="binding site" evidence="1">
    <location>
        <position position="676"/>
    </location>
    <ligand>
        <name>ATP</name>
        <dbReference type="ChEBI" id="CHEBI:30616"/>
    </ligand>
</feature>
<feature type="binding site" evidence="1">
    <location>
        <position position="677"/>
    </location>
    <ligand>
        <name>Mg(2+)</name>
        <dbReference type="ChEBI" id="CHEBI:18420"/>
    </ligand>
</feature>
<feature type="binding site" evidence="1">
    <location>
        <position position="716"/>
    </location>
    <ligand>
        <name>Mg(2+)</name>
        <dbReference type="ChEBI" id="CHEBI:18420"/>
    </ligand>
</feature>
<feature type="binding site" evidence="1">
    <location>
        <position position="720"/>
    </location>
    <ligand>
        <name>Mg(2+)</name>
        <dbReference type="ChEBI" id="CHEBI:18420"/>
    </ligand>
</feature>
<feature type="binding site" evidence="1">
    <location>
        <position position="884"/>
    </location>
    <ligand>
        <name>Mg(2+)</name>
        <dbReference type="ChEBI" id="CHEBI:18420"/>
    </ligand>
</feature>
<feature type="binding site" evidence="1">
    <location>
        <position position="886"/>
    </location>
    <ligand>
        <name>ATP</name>
        <dbReference type="ChEBI" id="CHEBI:30616"/>
    </ligand>
</feature>
<protein>
    <recommendedName>
        <fullName evidence="1">Phosphoribosylformylglycinamidine synthase</fullName>
        <shortName evidence="1">FGAM synthase</shortName>
        <shortName evidence="1">FGAMS</shortName>
        <ecNumber evidence="1">6.3.5.3</ecNumber>
    </recommendedName>
    <alternativeName>
        <fullName evidence="1">Formylglycinamide ribonucleotide amidotransferase</fullName>
        <shortName evidence="1">FGAR amidotransferase</shortName>
        <shortName evidence="1">FGAR-AT</shortName>
    </alternativeName>
</protein>
<keyword id="KW-0067">ATP-binding</keyword>
<keyword id="KW-0963">Cytoplasm</keyword>
<keyword id="KW-0315">Glutamine amidotransferase</keyword>
<keyword id="KW-0436">Ligase</keyword>
<keyword id="KW-0460">Magnesium</keyword>
<keyword id="KW-0479">Metal-binding</keyword>
<keyword id="KW-0547">Nucleotide-binding</keyword>
<keyword id="KW-0658">Purine biosynthesis</keyword>
<gene>
    <name evidence="1" type="primary">purL</name>
    <name type="ordered locus">Pfl01_0999</name>
</gene>
<evidence type="ECO:0000255" key="1">
    <source>
        <dbReference type="HAMAP-Rule" id="MF_00419"/>
    </source>
</evidence>
<evidence type="ECO:0000256" key="2">
    <source>
        <dbReference type="SAM" id="MobiDB-lite"/>
    </source>
</evidence>
<dbReference type="EC" id="6.3.5.3" evidence="1"/>
<dbReference type="EMBL" id="CP000094">
    <property type="protein sequence ID" value="ABA72742.1"/>
    <property type="molecule type" value="Genomic_DNA"/>
</dbReference>
<dbReference type="RefSeq" id="WP_011332594.1">
    <property type="nucleotide sequence ID" value="NC_007492.2"/>
</dbReference>
<dbReference type="SMR" id="Q3KHL4"/>
<dbReference type="MEROPS" id="C56.972"/>
<dbReference type="KEGG" id="pfo:Pfl01_0999"/>
<dbReference type="eggNOG" id="COG0046">
    <property type="taxonomic scope" value="Bacteria"/>
</dbReference>
<dbReference type="eggNOG" id="COG0047">
    <property type="taxonomic scope" value="Bacteria"/>
</dbReference>
<dbReference type="HOGENOM" id="CLU_001031_0_2_6"/>
<dbReference type="UniPathway" id="UPA00074">
    <property type="reaction ID" value="UER00128"/>
</dbReference>
<dbReference type="Proteomes" id="UP000002704">
    <property type="component" value="Chromosome"/>
</dbReference>
<dbReference type="GO" id="GO:0005737">
    <property type="term" value="C:cytoplasm"/>
    <property type="evidence" value="ECO:0007669"/>
    <property type="project" value="UniProtKB-SubCell"/>
</dbReference>
<dbReference type="GO" id="GO:0005524">
    <property type="term" value="F:ATP binding"/>
    <property type="evidence" value="ECO:0007669"/>
    <property type="project" value="UniProtKB-UniRule"/>
</dbReference>
<dbReference type="GO" id="GO:0046872">
    <property type="term" value="F:metal ion binding"/>
    <property type="evidence" value="ECO:0007669"/>
    <property type="project" value="UniProtKB-KW"/>
</dbReference>
<dbReference type="GO" id="GO:0004642">
    <property type="term" value="F:phosphoribosylformylglycinamidine synthase activity"/>
    <property type="evidence" value="ECO:0007669"/>
    <property type="project" value="UniProtKB-UniRule"/>
</dbReference>
<dbReference type="GO" id="GO:0006189">
    <property type="term" value="P:'de novo' IMP biosynthetic process"/>
    <property type="evidence" value="ECO:0007669"/>
    <property type="project" value="UniProtKB-UniRule"/>
</dbReference>
<dbReference type="CDD" id="cd01740">
    <property type="entry name" value="GATase1_FGAR_AT"/>
    <property type="match status" value="1"/>
</dbReference>
<dbReference type="CDD" id="cd02203">
    <property type="entry name" value="PurL_repeat1"/>
    <property type="match status" value="1"/>
</dbReference>
<dbReference type="CDD" id="cd02204">
    <property type="entry name" value="PurL_repeat2"/>
    <property type="match status" value="1"/>
</dbReference>
<dbReference type="FunFam" id="1.10.8.750:FF:000002">
    <property type="entry name" value="Phosphoribosylformylglycinamidine synthase"/>
    <property type="match status" value="1"/>
</dbReference>
<dbReference type="FunFam" id="3.30.1330.10:FF:000002">
    <property type="entry name" value="Phosphoribosylformylglycinamidine synthase"/>
    <property type="match status" value="1"/>
</dbReference>
<dbReference type="FunFam" id="3.30.1330.10:FF:000005">
    <property type="entry name" value="Phosphoribosylformylglycinamidine synthase"/>
    <property type="match status" value="1"/>
</dbReference>
<dbReference type="FunFam" id="3.40.50.880:FF:000008">
    <property type="entry name" value="Phosphoribosylformylglycinamidine synthase"/>
    <property type="match status" value="1"/>
</dbReference>
<dbReference type="FunFam" id="3.90.650.10:FF:000002">
    <property type="entry name" value="Phosphoribosylformylglycinamidine synthase"/>
    <property type="match status" value="1"/>
</dbReference>
<dbReference type="FunFam" id="3.90.650.10:FF:000005">
    <property type="entry name" value="Phosphoribosylformylglycinamidine synthase"/>
    <property type="match status" value="1"/>
</dbReference>
<dbReference type="Gene3D" id="3.40.50.880">
    <property type="match status" value="1"/>
</dbReference>
<dbReference type="Gene3D" id="1.10.8.750">
    <property type="entry name" value="Phosphoribosylformylglycinamidine synthase, linker domain"/>
    <property type="match status" value="1"/>
</dbReference>
<dbReference type="Gene3D" id="3.90.650.10">
    <property type="entry name" value="PurM-like C-terminal domain"/>
    <property type="match status" value="2"/>
</dbReference>
<dbReference type="Gene3D" id="3.30.1330.10">
    <property type="entry name" value="PurM-like, N-terminal domain"/>
    <property type="match status" value="2"/>
</dbReference>
<dbReference type="HAMAP" id="MF_00419">
    <property type="entry name" value="PurL_1"/>
    <property type="match status" value="1"/>
</dbReference>
<dbReference type="InterPro" id="IPR029062">
    <property type="entry name" value="Class_I_gatase-like"/>
</dbReference>
<dbReference type="InterPro" id="IPR040707">
    <property type="entry name" value="FGAR-AT_N"/>
</dbReference>
<dbReference type="InterPro" id="IPR055181">
    <property type="entry name" value="FGAR-AT_PurM_N-like"/>
</dbReference>
<dbReference type="InterPro" id="IPR010073">
    <property type="entry name" value="PurL_large"/>
</dbReference>
<dbReference type="InterPro" id="IPR041609">
    <property type="entry name" value="PurL_linker"/>
</dbReference>
<dbReference type="InterPro" id="IPR010918">
    <property type="entry name" value="PurM-like_C_dom"/>
</dbReference>
<dbReference type="InterPro" id="IPR036676">
    <property type="entry name" value="PurM-like_C_sf"/>
</dbReference>
<dbReference type="InterPro" id="IPR036921">
    <property type="entry name" value="PurM-like_N_sf"/>
</dbReference>
<dbReference type="InterPro" id="IPR036604">
    <property type="entry name" value="PurS-like_sf"/>
</dbReference>
<dbReference type="NCBIfam" id="TIGR01735">
    <property type="entry name" value="FGAM_synt"/>
    <property type="match status" value="1"/>
</dbReference>
<dbReference type="NCBIfam" id="NF003672">
    <property type="entry name" value="PRK05297.1"/>
    <property type="match status" value="1"/>
</dbReference>
<dbReference type="PANTHER" id="PTHR10099">
    <property type="entry name" value="PHOSPHORIBOSYLFORMYLGLYCINAMIDINE SYNTHASE"/>
    <property type="match status" value="1"/>
</dbReference>
<dbReference type="PANTHER" id="PTHR10099:SF1">
    <property type="entry name" value="PHOSPHORIBOSYLFORMYLGLYCINAMIDINE SYNTHASE"/>
    <property type="match status" value="1"/>
</dbReference>
<dbReference type="Pfam" id="PF02769">
    <property type="entry name" value="AIRS_C"/>
    <property type="match status" value="2"/>
</dbReference>
<dbReference type="Pfam" id="PF18072">
    <property type="entry name" value="FGAR-AT_linker"/>
    <property type="match status" value="1"/>
</dbReference>
<dbReference type="Pfam" id="PF18076">
    <property type="entry name" value="FGAR-AT_N"/>
    <property type="match status" value="1"/>
</dbReference>
<dbReference type="Pfam" id="PF22689">
    <property type="entry name" value="FGAR-AT_PurM_N-like"/>
    <property type="match status" value="1"/>
</dbReference>
<dbReference type="Pfam" id="PF13507">
    <property type="entry name" value="GATase_5"/>
    <property type="match status" value="1"/>
</dbReference>
<dbReference type="SMART" id="SM01211">
    <property type="entry name" value="GATase_5"/>
    <property type="match status" value="1"/>
</dbReference>
<dbReference type="SUPFAM" id="SSF52317">
    <property type="entry name" value="Class I glutamine amidotransferase-like"/>
    <property type="match status" value="1"/>
</dbReference>
<dbReference type="SUPFAM" id="SSF109736">
    <property type="entry name" value="FGAM synthase PurL, linker domain"/>
    <property type="match status" value="1"/>
</dbReference>
<dbReference type="SUPFAM" id="SSF56042">
    <property type="entry name" value="PurM C-terminal domain-like"/>
    <property type="match status" value="2"/>
</dbReference>
<dbReference type="SUPFAM" id="SSF55326">
    <property type="entry name" value="PurM N-terminal domain-like"/>
    <property type="match status" value="2"/>
</dbReference>
<dbReference type="SUPFAM" id="SSF82697">
    <property type="entry name" value="PurS-like"/>
    <property type="match status" value="1"/>
</dbReference>
<dbReference type="PROSITE" id="PS51273">
    <property type="entry name" value="GATASE_TYPE_1"/>
    <property type="match status" value="1"/>
</dbReference>
<comment type="function">
    <text evidence="1">Phosphoribosylformylglycinamidine synthase involved in the purines biosynthetic pathway. Catalyzes the ATP-dependent conversion of formylglycinamide ribonucleotide (FGAR) and glutamine to yield formylglycinamidine ribonucleotide (FGAM) and glutamate.</text>
</comment>
<comment type="catalytic activity">
    <reaction evidence="1">
        <text>N(2)-formyl-N(1)-(5-phospho-beta-D-ribosyl)glycinamide + L-glutamine + ATP + H2O = 2-formamido-N(1)-(5-O-phospho-beta-D-ribosyl)acetamidine + L-glutamate + ADP + phosphate + H(+)</text>
        <dbReference type="Rhea" id="RHEA:17129"/>
        <dbReference type="ChEBI" id="CHEBI:15377"/>
        <dbReference type="ChEBI" id="CHEBI:15378"/>
        <dbReference type="ChEBI" id="CHEBI:29985"/>
        <dbReference type="ChEBI" id="CHEBI:30616"/>
        <dbReference type="ChEBI" id="CHEBI:43474"/>
        <dbReference type="ChEBI" id="CHEBI:58359"/>
        <dbReference type="ChEBI" id="CHEBI:147286"/>
        <dbReference type="ChEBI" id="CHEBI:147287"/>
        <dbReference type="ChEBI" id="CHEBI:456216"/>
        <dbReference type="EC" id="6.3.5.3"/>
    </reaction>
</comment>
<comment type="pathway">
    <text evidence="1">Purine metabolism; IMP biosynthesis via de novo pathway; 5-amino-1-(5-phospho-D-ribosyl)imidazole from N(2)-formyl-N(1)-(5-phospho-D-ribosyl)glycinamide: step 1/2.</text>
</comment>
<comment type="subunit">
    <text evidence="1">Monomer.</text>
</comment>
<comment type="subcellular location">
    <subcellularLocation>
        <location evidence="1">Cytoplasm</location>
    </subcellularLocation>
</comment>
<comment type="similarity">
    <text evidence="1">In the N-terminal section; belongs to the FGAMS family.</text>
</comment>
<proteinExistence type="inferred from homology"/>